<proteinExistence type="inferred from homology"/>
<reference key="1">
    <citation type="journal article" date="2012" name="BMC Genomics">
        <title>Comparative genomics and transcriptomics of lineages I, II, and III strains of Listeria monocytogenes.</title>
        <authorList>
            <person name="Hain T."/>
            <person name="Ghai R."/>
            <person name="Billion A."/>
            <person name="Kuenne C.T."/>
            <person name="Steinweg C."/>
            <person name="Izar B."/>
            <person name="Mohamed W."/>
            <person name="Mraheil M."/>
            <person name="Domann E."/>
            <person name="Schaffrath S."/>
            <person name="Karst U."/>
            <person name="Goesmann A."/>
            <person name="Oehm S."/>
            <person name="Puhler A."/>
            <person name="Merkl R."/>
            <person name="Vorwerk S."/>
            <person name="Glaser P."/>
            <person name="Garrido P."/>
            <person name="Rusniok C."/>
            <person name="Buchrieser C."/>
            <person name="Goebel W."/>
            <person name="Chakraborty T."/>
        </authorList>
    </citation>
    <scope>NUCLEOTIDE SEQUENCE [LARGE SCALE GENOMIC DNA]</scope>
    <source>
        <strain>CLIP80459</strain>
    </source>
</reference>
<evidence type="ECO:0000255" key="1">
    <source>
        <dbReference type="HAMAP-Rule" id="MF_01200"/>
    </source>
</evidence>
<name>PYRF_LISMC</name>
<organism>
    <name type="scientific">Listeria monocytogenes serotype 4b (strain CLIP80459)</name>
    <dbReference type="NCBI Taxonomy" id="568819"/>
    <lineage>
        <taxon>Bacteria</taxon>
        <taxon>Bacillati</taxon>
        <taxon>Bacillota</taxon>
        <taxon>Bacilli</taxon>
        <taxon>Bacillales</taxon>
        <taxon>Listeriaceae</taxon>
        <taxon>Listeria</taxon>
    </lineage>
</organism>
<feature type="chain" id="PRO_1000213822" description="Orotidine 5'-phosphate decarboxylase">
    <location>
        <begin position="1"/>
        <end position="233"/>
    </location>
</feature>
<feature type="active site" description="Proton donor" evidence="1">
    <location>
        <position position="60"/>
    </location>
</feature>
<feature type="binding site" evidence="1">
    <location>
        <position position="9"/>
    </location>
    <ligand>
        <name>substrate</name>
    </ligand>
</feature>
<feature type="binding site" evidence="1">
    <location>
        <position position="31"/>
    </location>
    <ligand>
        <name>substrate</name>
    </ligand>
</feature>
<feature type="binding site" evidence="1">
    <location>
        <begin position="58"/>
        <end position="67"/>
    </location>
    <ligand>
        <name>substrate</name>
    </ligand>
</feature>
<feature type="binding site" evidence="1">
    <location>
        <position position="120"/>
    </location>
    <ligand>
        <name>substrate</name>
    </ligand>
</feature>
<feature type="binding site" evidence="1">
    <location>
        <position position="182"/>
    </location>
    <ligand>
        <name>substrate</name>
    </ligand>
</feature>
<feature type="binding site" evidence="1">
    <location>
        <position position="191"/>
    </location>
    <ligand>
        <name>substrate</name>
    </ligand>
</feature>
<feature type="binding site" evidence="1">
    <location>
        <position position="211"/>
    </location>
    <ligand>
        <name>substrate</name>
    </ligand>
</feature>
<feature type="binding site" evidence="1">
    <location>
        <position position="212"/>
    </location>
    <ligand>
        <name>substrate</name>
    </ligand>
</feature>
<gene>
    <name evidence="1" type="primary">pyrF</name>
    <name type="ordered locus">Lm4b_01848</name>
</gene>
<protein>
    <recommendedName>
        <fullName evidence="1">Orotidine 5'-phosphate decarboxylase</fullName>
        <ecNumber evidence="1">4.1.1.23</ecNumber>
    </recommendedName>
    <alternativeName>
        <fullName evidence="1">OMP decarboxylase</fullName>
        <shortName evidence="1">OMPDCase</shortName>
        <shortName evidence="1">OMPdecase</shortName>
    </alternativeName>
</protein>
<keyword id="KW-0210">Decarboxylase</keyword>
<keyword id="KW-0456">Lyase</keyword>
<keyword id="KW-0665">Pyrimidine biosynthesis</keyword>
<dbReference type="EC" id="4.1.1.23" evidence="1"/>
<dbReference type="EMBL" id="FM242711">
    <property type="protein sequence ID" value="CAS05606.1"/>
    <property type="molecule type" value="Genomic_DNA"/>
</dbReference>
<dbReference type="RefSeq" id="WP_003725664.1">
    <property type="nucleotide sequence ID" value="NC_012488.1"/>
</dbReference>
<dbReference type="SMR" id="C1KWD1"/>
<dbReference type="KEGG" id="lmc:Lm4b_01848"/>
<dbReference type="HOGENOM" id="CLU_067069_1_1_9"/>
<dbReference type="UniPathway" id="UPA00070">
    <property type="reaction ID" value="UER00120"/>
</dbReference>
<dbReference type="GO" id="GO:0005829">
    <property type="term" value="C:cytosol"/>
    <property type="evidence" value="ECO:0007669"/>
    <property type="project" value="TreeGrafter"/>
</dbReference>
<dbReference type="GO" id="GO:0004590">
    <property type="term" value="F:orotidine-5'-phosphate decarboxylase activity"/>
    <property type="evidence" value="ECO:0007669"/>
    <property type="project" value="UniProtKB-UniRule"/>
</dbReference>
<dbReference type="GO" id="GO:0006207">
    <property type="term" value="P:'de novo' pyrimidine nucleobase biosynthetic process"/>
    <property type="evidence" value="ECO:0007669"/>
    <property type="project" value="InterPro"/>
</dbReference>
<dbReference type="GO" id="GO:0044205">
    <property type="term" value="P:'de novo' UMP biosynthetic process"/>
    <property type="evidence" value="ECO:0007669"/>
    <property type="project" value="UniProtKB-UniRule"/>
</dbReference>
<dbReference type="CDD" id="cd04725">
    <property type="entry name" value="OMP_decarboxylase_like"/>
    <property type="match status" value="1"/>
</dbReference>
<dbReference type="FunFam" id="3.20.20.70:FF:000015">
    <property type="entry name" value="Orotidine 5'-phosphate decarboxylase"/>
    <property type="match status" value="1"/>
</dbReference>
<dbReference type="Gene3D" id="3.20.20.70">
    <property type="entry name" value="Aldolase class I"/>
    <property type="match status" value="1"/>
</dbReference>
<dbReference type="HAMAP" id="MF_01200_B">
    <property type="entry name" value="OMPdecase_type1_B"/>
    <property type="match status" value="1"/>
</dbReference>
<dbReference type="InterPro" id="IPR013785">
    <property type="entry name" value="Aldolase_TIM"/>
</dbReference>
<dbReference type="InterPro" id="IPR014732">
    <property type="entry name" value="OMPdecase"/>
</dbReference>
<dbReference type="InterPro" id="IPR018089">
    <property type="entry name" value="OMPdecase_AS"/>
</dbReference>
<dbReference type="InterPro" id="IPR047596">
    <property type="entry name" value="OMPdecase_bac"/>
</dbReference>
<dbReference type="InterPro" id="IPR001754">
    <property type="entry name" value="OMPdeCOase_dom"/>
</dbReference>
<dbReference type="InterPro" id="IPR011060">
    <property type="entry name" value="RibuloseP-bd_barrel"/>
</dbReference>
<dbReference type="NCBIfam" id="NF001273">
    <property type="entry name" value="PRK00230.1"/>
    <property type="match status" value="1"/>
</dbReference>
<dbReference type="NCBIfam" id="TIGR01740">
    <property type="entry name" value="pyrF"/>
    <property type="match status" value="1"/>
</dbReference>
<dbReference type="PANTHER" id="PTHR32119">
    <property type="entry name" value="OROTIDINE 5'-PHOSPHATE DECARBOXYLASE"/>
    <property type="match status" value="1"/>
</dbReference>
<dbReference type="PANTHER" id="PTHR32119:SF2">
    <property type="entry name" value="OROTIDINE 5'-PHOSPHATE DECARBOXYLASE"/>
    <property type="match status" value="1"/>
</dbReference>
<dbReference type="Pfam" id="PF00215">
    <property type="entry name" value="OMPdecase"/>
    <property type="match status" value="1"/>
</dbReference>
<dbReference type="SMART" id="SM00934">
    <property type="entry name" value="OMPdecase"/>
    <property type="match status" value="1"/>
</dbReference>
<dbReference type="SUPFAM" id="SSF51366">
    <property type="entry name" value="Ribulose-phoshate binding barrel"/>
    <property type="match status" value="1"/>
</dbReference>
<dbReference type="PROSITE" id="PS00156">
    <property type="entry name" value="OMPDECASE"/>
    <property type="match status" value="1"/>
</dbReference>
<accession>C1KWD1</accession>
<sequence length="233" mass="25455">MNKPIIALDFQTYEEVETFLAKFSGETLSVKVGMELFYSNGPIIVEKIKQQHHEIFLDLKLHDIPNTVKSAMIGLAKLGVDMVNVHAAGGKKMMEAAREGLEIGSSSGKRPKIIAVTQLTSTSETDMQTEQLIKTSLLESVMHYSNLSKQAGLDGVVCSALEAEDIKQQNGADFLRVTPGIRLASDAADDQIRVVTPEKARLIGSSNIVVGRSITRANDPVEAYNQVLKEWNA</sequence>
<comment type="function">
    <text evidence="1">Catalyzes the decarboxylation of orotidine 5'-monophosphate (OMP) to uridine 5'-monophosphate (UMP).</text>
</comment>
<comment type="catalytic activity">
    <reaction evidence="1">
        <text>orotidine 5'-phosphate + H(+) = UMP + CO2</text>
        <dbReference type="Rhea" id="RHEA:11596"/>
        <dbReference type="ChEBI" id="CHEBI:15378"/>
        <dbReference type="ChEBI" id="CHEBI:16526"/>
        <dbReference type="ChEBI" id="CHEBI:57538"/>
        <dbReference type="ChEBI" id="CHEBI:57865"/>
        <dbReference type="EC" id="4.1.1.23"/>
    </reaction>
</comment>
<comment type="pathway">
    <text evidence="1">Pyrimidine metabolism; UMP biosynthesis via de novo pathway; UMP from orotate: step 2/2.</text>
</comment>
<comment type="subunit">
    <text evidence="1">Homodimer.</text>
</comment>
<comment type="similarity">
    <text evidence="1">Belongs to the OMP decarboxylase family. Type 1 subfamily.</text>
</comment>